<comment type="function">
    <text evidence="8 9 11 14 15">Component of SUN-protein-containing multivariate complexes also called LINC complexes which link the nucleoskeleton and cytoskeleton by providing versatile outer nuclear membrane attachment sites for cytoskeletal filaments (PubMed:24667841). Required for the maintenance and/or formation of polarized nuclear shape in root hairs (PubMed:21294795). Modulates the anchoring and mobility of WIP proteins in the nuclear envelope (NE) (PubMed:22270916). In association with SUN1, may be involved in telomere attachment to nuclear envelope in the prophase of meiosis (PubMed:25412930). As component of the SUN-WIP-WIT2-KAKU1 complex, mediates the transfer of cytoplasmic forces to the nuclear envelope (NE), leading to nuclear shape changes (PubMed:25759303).</text>
</comment>
<comment type="subunit">
    <text evidence="7 9 10 11 12 13 15 16">Forms homomers (e.g. dimers, trimers and tetramers) and heteromers with SUN1 (PubMed:19807882, PubMed:25217773). Interacts with SUN3, SUN4 and TIK (PubMed:25217773). Core component of the LINC complex which is composed of inner nuclear membrane SUN domain-containing proteins coupled to outer nuclear membrane WIP and WIT proteins. The LINC complex also involves nucleoskeletal proteins CRWN/LINC and possibly KAKU4 and the cytoskeletal myosin KAKU1 (PubMed:25759303). Interacts with LINC1, WIP1, WIP2 and WIP3 at the nuclear envelope (NE) (PubMed:22270916, PubMed:23973298, PubMed:24667841). Interacts with SINE1, SINE2, SINE3 and SINE4 (PubMed:24891605). Interacts with NEAP1, NEA2 and NEAP3 (PubMed:27630107).</text>
</comment>
<comment type="subcellular location">
    <subcellularLocation>
        <location evidence="7 8 11 14">Nucleus inner membrane</location>
        <topology evidence="3">Single-pass type II membrane protein</topology>
    </subcellularLocation>
    <subcellularLocation>
        <location evidence="8">Cytoplasm</location>
        <location evidence="8">Cytoskeleton</location>
        <location evidence="8">Phragmoplast</location>
    </subcellularLocation>
    <subcellularLocation>
        <location evidence="8">Endoplasmic reticulum membrane</location>
        <topology evidence="3">Single-pass type II membrane protein</topology>
    </subcellularLocation>
    <subcellularLocation>
        <location evidence="9">Nucleus envelope</location>
    </subcellularLocation>
    <text evidence="8 14">Dynamic localization during mitosis and meiosis, tightly coupled with nuclear envelope (NE) dynamics. Localized with the nuclear envelope during meiotic prophase I. NE re-formation during metaphase is temporally and spatially coordinated with plant-specific microtubule structures such as phragmoplasts. During anaphase, after NE breakdown (NEBD), predominantly localized with the endoplasmic reticulum, in the outside of the segregated chromosomes and not in between segregated chromosomes.</text>
</comment>
<comment type="tissue specificity">
    <text evidence="7 8">Expressed in roots, hypocotyls, cotyledons and leaves and inflorescences.</text>
</comment>
<comment type="induction">
    <text evidence="7">Up-regulated in proliferating tissues.</text>
</comment>
<comment type="domain">
    <text evidence="1 9">The SUN domain may play a role in nuclear anchoring and/or migration (By similarity). The SUN domain is required for interactions with WIP proteins (PubMed:22270916).</text>
</comment>
<comment type="disruption phenotype">
    <text evidence="8 14">No visible phenotype. When associated with SUN1 disruption, abnormal nuclear shape in some cells such as mature root hairs but also numerous meiotic defects namely a delay in the progression of meiosis, absence of full synapsis and a reduction in the mean cell chiasma frequency.</text>
</comment>
<comment type="sequence caution" evidence="18">
    <conflict type="erroneous initiation">
        <sequence resource="EMBL-CDS" id="AAM65947"/>
    </conflict>
    <text>Truncated N-terminus.</text>
</comment>
<name>SUN2_ARATH</name>
<dbReference type="EMBL" id="AC011708">
    <property type="protein sequence ID" value="AAF19576.1"/>
    <property type="molecule type" value="Genomic_DNA"/>
</dbReference>
<dbReference type="EMBL" id="CP002686">
    <property type="protein sequence ID" value="AEE74948.1"/>
    <property type="molecule type" value="Genomic_DNA"/>
</dbReference>
<dbReference type="EMBL" id="AK118080">
    <property type="protein sequence ID" value="BAC42710.1"/>
    <property type="molecule type" value="mRNA"/>
</dbReference>
<dbReference type="EMBL" id="BT006045">
    <property type="protein sequence ID" value="AAP04030.1"/>
    <property type="molecule type" value="mRNA"/>
</dbReference>
<dbReference type="EMBL" id="AY088410">
    <property type="protein sequence ID" value="AAM65947.1"/>
    <property type="status" value="ALT_INIT"/>
    <property type="molecule type" value="mRNA"/>
</dbReference>
<dbReference type="RefSeq" id="NP_566380.2">
    <property type="nucleotide sequence ID" value="NM_111910.4"/>
</dbReference>
<dbReference type="SMR" id="Q9SG79"/>
<dbReference type="FunCoup" id="Q9SG79">
    <property type="interactions" value="885"/>
</dbReference>
<dbReference type="IntAct" id="Q9SG79">
    <property type="interactions" value="1"/>
</dbReference>
<dbReference type="STRING" id="3702.Q9SG79"/>
<dbReference type="iPTMnet" id="Q9SG79"/>
<dbReference type="PaxDb" id="3702-AT3G10730.1"/>
<dbReference type="ProteomicsDB" id="245246"/>
<dbReference type="EnsemblPlants" id="AT3G10730.1">
    <property type="protein sequence ID" value="AT3G10730.1"/>
    <property type="gene ID" value="AT3G10730"/>
</dbReference>
<dbReference type="GeneID" id="820242"/>
<dbReference type="Gramene" id="AT3G10730.1">
    <property type="protein sequence ID" value="AT3G10730.1"/>
    <property type="gene ID" value="AT3G10730"/>
</dbReference>
<dbReference type="KEGG" id="ath:AT3G10730"/>
<dbReference type="Araport" id="AT3G10730"/>
<dbReference type="TAIR" id="AT3G10730">
    <property type="gene designation" value="SUN2"/>
</dbReference>
<dbReference type="eggNOG" id="KOG2687">
    <property type="taxonomic scope" value="Eukaryota"/>
</dbReference>
<dbReference type="HOGENOM" id="CLU_043737_3_0_1"/>
<dbReference type="InParanoid" id="Q9SG79"/>
<dbReference type="OMA" id="NMYEQML"/>
<dbReference type="PhylomeDB" id="Q9SG79"/>
<dbReference type="CD-CODE" id="33FCD62D">
    <property type="entry name" value="Centrosome"/>
</dbReference>
<dbReference type="PRO" id="PR:Q9SG79"/>
<dbReference type="Proteomes" id="UP000006548">
    <property type="component" value="Chromosome 3"/>
</dbReference>
<dbReference type="ExpressionAtlas" id="Q9SG79">
    <property type="expression patterns" value="baseline and differential"/>
</dbReference>
<dbReference type="GO" id="GO:0005783">
    <property type="term" value="C:endoplasmic reticulum"/>
    <property type="evidence" value="ECO:0007005"/>
    <property type="project" value="TAIR"/>
</dbReference>
<dbReference type="GO" id="GO:0005789">
    <property type="term" value="C:endoplasmic reticulum membrane"/>
    <property type="evidence" value="ECO:0000250"/>
    <property type="project" value="UniProtKB"/>
</dbReference>
<dbReference type="GO" id="GO:0005635">
    <property type="term" value="C:nuclear envelope"/>
    <property type="evidence" value="ECO:0000314"/>
    <property type="project" value="UniProtKB"/>
</dbReference>
<dbReference type="GO" id="GO:0005637">
    <property type="term" value="C:nuclear inner membrane"/>
    <property type="evidence" value="ECO:0007669"/>
    <property type="project" value="UniProtKB-SubCell"/>
</dbReference>
<dbReference type="GO" id="GO:0009524">
    <property type="term" value="C:phragmoplast"/>
    <property type="evidence" value="ECO:0000314"/>
    <property type="project" value="UniProtKB"/>
</dbReference>
<dbReference type="GO" id="GO:0005819">
    <property type="term" value="C:spindle"/>
    <property type="evidence" value="ECO:0007005"/>
    <property type="project" value="TAIR"/>
</dbReference>
<dbReference type="GO" id="GO:0043495">
    <property type="term" value="F:protein-membrane adaptor activity"/>
    <property type="evidence" value="ECO:0000314"/>
    <property type="project" value="UniProtKB"/>
</dbReference>
<dbReference type="GO" id="GO:0070197">
    <property type="term" value="P:meiotic attachment of telomere to nuclear envelope"/>
    <property type="evidence" value="ECO:0000315"/>
    <property type="project" value="UniProtKB"/>
</dbReference>
<dbReference type="GO" id="GO:0006997">
    <property type="term" value="P:nucleus organization"/>
    <property type="evidence" value="ECO:0000315"/>
    <property type="project" value="UniProtKB"/>
</dbReference>
<dbReference type="GO" id="GO:0051291">
    <property type="term" value="P:protein heterooligomerization"/>
    <property type="evidence" value="ECO:0000314"/>
    <property type="project" value="UniProtKB"/>
</dbReference>
<dbReference type="GO" id="GO:0051260">
    <property type="term" value="P:protein homooligomerization"/>
    <property type="evidence" value="ECO:0000314"/>
    <property type="project" value="UniProtKB"/>
</dbReference>
<dbReference type="GO" id="GO:0090435">
    <property type="term" value="P:protein localization to nuclear envelope"/>
    <property type="evidence" value="ECO:0000314"/>
    <property type="project" value="UniProtKB"/>
</dbReference>
<dbReference type="FunFam" id="2.60.120.260:FF:000096">
    <property type="entry name" value="SUN domain protein1"/>
    <property type="match status" value="1"/>
</dbReference>
<dbReference type="Gene3D" id="2.60.120.260">
    <property type="entry name" value="Galactose-binding domain-like"/>
    <property type="match status" value="1"/>
</dbReference>
<dbReference type="InterPro" id="IPR045119">
    <property type="entry name" value="SUN1-5"/>
</dbReference>
<dbReference type="InterPro" id="IPR012919">
    <property type="entry name" value="SUN_dom"/>
</dbReference>
<dbReference type="PANTHER" id="PTHR12911">
    <property type="entry name" value="SAD1/UNC-84-LIKE PROTEIN-RELATED"/>
    <property type="match status" value="1"/>
</dbReference>
<dbReference type="PANTHER" id="PTHR12911:SF47">
    <property type="entry name" value="SUN DOMAIN-CONTAINING PROTEIN 2"/>
    <property type="match status" value="1"/>
</dbReference>
<dbReference type="Pfam" id="PF07738">
    <property type="entry name" value="Sad1_UNC"/>
    <property type="match status" value="1"/>
</dbReference>
<dbReference type="PROSITE" id="PS51469">
    <property type="entry name" value="SUN"/>
    <property type="match status" value="1"/>
</dbReference>
<evidence type="ECO:0000250" key="1">
    <source>
        <dbReference type="UniProtKB" id="O94901"/>
    </source>
</evidence>
<evidence type="ECO:0000250" key="2">
    <source>
        <dbReference type="UniProtKB" id="Q9FF75"/>
    </source>
</evidence>
<evidence type="ECO:0000255" key="3"/>
<evidence type="ECO:0000255" key="4">
    <source>
        <dbReference type="PROSITE-ProRule" id="PRU00768"/>
    </source>
</evidence>
<evidence type="ECO:0000255" key="5">
    <source>
        <dbReference type="PROSITE-ProRule" id="PRU00802"/>
    </source>
</evidence>
<evidence type="ECO:0000256" key="6">
    <source>
        <dbReference type="SAM" id="MobiDB-lite"/>
    </source>
</evidence>
<evidence type="ECO:0000269" key="7">
    <source>
    </source>
</evidence>
<evidence type="ECO:0000269" key="8">
    <source>
    </source>
</evidence>
<evidence type="ECO:0000269" key="9">
    <source>
    </source>
</evidence>
<evidence type="ECO:0000269" key="10">
    <source>
    </source>
</evidence>
<evidence type="ECO:0000269" key="11">
    <source>
    </source>
</evidence>
<evidence type="ECO:0000269" key="12">
    <source>
    </source>
</evidence>
<evidence type="ECO:0000269" key="13">
    <source>
    </source>
</evidence>
<evidence type="ECO:0000269" key="14">
    <source>
    </source>
</evidence>
<evidence type="ECO:0000269" key="15">
    <source>
    </source>
</evidence>
<evidence type="ECO:0000269" key="16">
    <source>
    </source>
</evidence>
<evidence type="ECO:0000303" key="17">
    <source>
    </source>
</evidence>
<evidence type="ECO:0000305" key="18"/>
<evidence type="ECO:0000312" key="19">
    <source>
        <dbReference type="Araport" id="AT3G10730"/>
    </source>
</evidence>
<evidence type="ECO:0000312" key="20">
    <source>
        <dbReference type="EMBL" id="AAF19576.1"/>
    </source>
</evidence>
<evidence type="ECO:0007744" key="21">
    <source>
    </source>
</evidence>
<keyword id="KW-0007">Acetylation</keyword>
<keyword id="KW-0175">Coiled coil</keyword>
<keyword id="KW-0963">Cytoplasm</keyword>
<keyword id="KW-0206">Cytoskeleton</keyword>
<keyword id="KW-0256">Endoplasmic reticulum</keyword>
<keyword id="KW-0472">Membrane</keyword>
<keyword id="KW-0539">Nucleus</keyword>
<keyword id="KW-0597">Phosphoprotein</keyword>
<keyword id="KW-1185">Reference proteome</keyword>
<keyword id="KW-0735">Signal-anchor</keyword>
<keyword id="KW-0812">Transmembrane</keyword>
<keyword id="KW-1133">Transmembrane helix</keyword>
<proteinExistence type="evidence at protein level"/>
<sequence>MSASTVSITASPRTIRRTPVLSGEKKSNFDFPPSESHANAAIGESSAGTNKDLIRAEAAGERSNTYDVGPVTRKSGSTATGTNTTTTQRRTRKSQGNKIDRGKWKTVVRVFAKQFGALLLLVGLIQLIRKLTLKDSSLSSSNFPIETEMVLSELESRISAVDGLVKTTTKMMQVQVEFLDKKMDSESRALRQTIDSTSSVLHSELKKVESKTERLQVSVDELNAKPLVSREELERVYEELKKGKVGDSDVNIDKLRAYARDIVEKEIGKHVADGLGRVDYALASGGAFVMGHSDPFLVGNGRNWFGTSRRRVHSKAVKMLTPSFGEPGQCFPLKGSNGYVLVRLRAPIIPEAVTLEHVSKAVAYDRSSAPKDCRVSGWLGDIDMETETMPLLTEFSYDLDRSNAQTFDIADSAHSGLVNTVRLDFNSNHGSSSHTCIYRFRVHGRELDSVSVAHA</sequence>
<reference key="1">
    <citation type="journal article" date="2000" name="Nature">
        <title>Sequence and analysis of chromosome 3 of the plant Arabidopsis thaliana.</title>
        <authorList>
            <person name="Salanoubat M."/>
            <person name="Lemcke K."/>
            <person name="Rieger M."/>
            <person name="Ansorge W."/>
            <person name="Unseld M."/>
            <person name="Fartmann B."/>
            <person name="Valle G."/>
            <person name="Bloecker H."/>
            <person name="Perez-Alonso M."/>
            <person name="Obermaier B."/>
            <person name="Delseny M."/>
            <person name="Boutry M."/>
            <person name="Grivell L.A."/>
            <person name="Mache R."/>
            <person name="Puigdomenech P."/>
            <person name="De Simone V."/>
            <person name="Choisne N."/>
            <person name="Artiguenave F."/>
            <person name="Robert C."/>
            <person name="Brottier P."/>
            <person name="Wincker P."/>
            <person name="Cattolico L."/>
            <person name="Weissenbach J."/>
            <person name="Saurin W."/>
            <person name="Quetier F."/>
            <person name="Schaefer M."/>
            <person name="Mueller-Auer S."/>
            <person name="Gabel C."/>
            <person name="Fuchs M."/>
            <person name="Benes V."/>
            <person name="Wurmbach E."/>
            <person name="Drzonek H."/>
            <person name="Erfle H."/>
            <person name="Jordan N."/>
            <person name="Bangert S."/>
            <person name="Wiedelmann R."/>
            <person name="Kranz H."/>
            <person name="Voss H."/>
            <person name="Holland R."/>
            <person name="Brandt P."/>
            <person name="Nyakatura G."/>
            <person name="Vezzi A."/>
            <person name="D'Angelo M."/>
            <person name="Pallavicini A."/>
            <person name="Toppo S."/>
            <person name="Simionati B."/>
            <person name="Conrad A."/>
            <person name="Hornischer K."/>
            <person name="Kauer G."/>
            <person name="Loehnert T.-H."/>
            <person name="Nordsiek G."/>
            <person name="Reichelt J."/>
            <person name="Scharfe M."/>
            <person name="Schoen O."/>
            <person name="Bargues M."/>
            <person name="Terol J."/>
            <person name="Climent J."/>
            <person name="Navarro P."/>
            <person name="Collado C."/>
            <person name="Perez-Perez A."/>
            <person name="Ottenwaelder B."/>
            <person name="Duchemin D."/>
            <person name="Cooke R."/>
            <person name="Laudie M."/>
            <person name="Berger-Llauro C."/>
            <person name="Purnelle B."/>
            <person name="Masuy D."/>
            <person name="de Haan M."/>
            <person name="Maarse A.C."/>
            <person name="Alcaraz J.-P."/>
            <person name="Cottet A."/>
            <person name="Casacuberta E."/>
            <person name="Monfort A."/>
            <person name="Argiriou A."/>
            <person name="Flores M."/>
            <person name="Liguori R."/>
            <person name="Vitale D."/>
            <person name="Mannhaupt G."/>
            <person name="Haase D."/>
            <person name="Schoof H."/>
            <person name="Rudd S."/>
            <person name="Zaccaria P."/>
            <person name="Mewes H.-W."/>
            <person name="Mayer K.F.X."/>
            <person name="Kaul S."/>
            <person name="Town C.D."/>
            <person name="Koo H.L."/>
            <person name="Tallon L.J."/>
            <person name="Jenkins J."/>
            <person name="Rooney T."/>
            <person name="Rizzo M."/>
            <person name="Walts A."/>
            <person name="Utterback T."/>
            <person name="Fujii C.Y."/>
            <person name="Shea T.P."/>
            <person name="Creasy T.H."/>
            <person name="Haas B."/>
            <person name="Maiti R."/>
            <person name="Wu D."/>
            <person name="Peterson J."/>
            <person name="Van Aken S."/>
            <person name="Pai G."/>
            <person name="Militscher J."/>
            <person name="Sellers P."/>
            <person name="Gill J.E."/>
            <person name="Feldblyum T.V."/>
            <person name="Preuss D."/>
            <person name="Lin X."/>
            <person name="Nierman W.C."/>
            <person name="Salzberg S.L."/>
            <person name="White O."/>
            <person name="Venter J.C."/>
            <person name="Fraser C.M."/>
            <person name="Kaneko T."/>
            <person name="Nakamura Y."/>
            <person name="Sato S."/>
            <person name="Kato T."/>
            <person name="Asamizu E."/>
            <person name="Sasamoto S."/>
            <person name="Kimura T."/>
            <person name="Idesawa K."/>
            <person name="Kawashima K."/>
            <person name="Kishida Y."/>
            <person name="Kiyokawa C."/>
            <person name="Kohara M."/>
            <person name="Matsumoto M."/>
            <person name="Matsuno A."/>
            <person name="Muraki A."/>
            <person name="Nakayama S."/>
            <person name="Nakazaki N."/>
            <person name="Shinpo S."/>
            <person name="Takeuchi C."/>
            <person name="Wada T."/>
            <person name="Watanabe A."/>
            <person name="Yamada M."/>
            <person name="Yasuda M."/>
            <person name="Tabata S."/>
        </authorList>
    </citation>
    <scope>NUCLEOTIDE SEQUENCE [LARGE SCALE GENOMIC DNA]</scope>
    <source>
        <strain>cv. Columbia</strain>
    </source>
</reference>
<reference key="2">
    <citation type="journal article" date="2017" name="Plant J.">
        <title>Araport11: a complete reannotation of the Arabidopsis thaliana reference genome.</title>
        <authorList>
            <person name="Cheng C.Y."/>
            <person name="Krishnakumar V."/>
            <person name="Chan A.P."/>
            <person name="Thibaud-Nissen F."/>
            <person name="Schobel S."/>
            <person name="Town C.D."/>
        </authorList>
    </citation>
    <scope>GENOME REANNOTATION</scope>
    <source>
        <strain>cv. Columbia</strain>
    </source>
</reference>
<reference key="3">
    <citation type="journal article" date="2002" name="Science">
        <title>Functional annotation of a full-length Arabidopsis cDNA collection.</title>
        <authorList>
            <person name="Seki M."/>
            <person name="Narusaka M."/>
            <person name="Kamiya A."/>
            <person name="Ishida J."/>
            <person name="Satou M."/>
            <person name="Sakurai T."/>
            <person name="Nakajima M."/>
            <person name="Enju A."/>
            <person name="Akiyama K."/>
            <person name="Oono Y."/>
            <person name="Muramatsu M."/>
            <person name="Hayashizaki Y."/>
            <person name="Kawai J."/>
            <person name="Carninci P."/>
            <person name="Itoh M."/>
            <person name="Ishii Y."/>
            <person name="Arakawa T."/>
            <person name="Shibata K."/>
            <person name="Shinagawa A."/>
            <person name="Shinozaki K."/>
        </authorList>
    </citation>
    <scope>NUCLEOTIDE SEQUENCE [LARGE SCALE MRNA]</scope>
    <source>
        <strain>cv. Columbia</strain>
    </source>
</reference>
<reference key="4">
    <citation type="journal article" date="2003" name="Science">
        <title>Empirical analysis of transcriptional activity in the Arabidopsis genome.</title>
        <authorList>
            <person name="Yamada K."/>
            <person name="Lim J."/>
            <person name="Dale J.M."/>
            <person name="Chen H."/>
            <person name="Shinn P."/>
            <person name="Palm C.J."/>
            <person name="Southwick A.M."/>
            <person name="Wu H.C."/>
            <person name="Kim C.J."/>
            <person name="Nguyen M."/>
            <person name="Pham P.K."/>
            <person name="Cheuk R.F."/>
            <person name="Karlin-Newmann G."/>
            <person name="Liu S.X."/>
            <person name="Lam B."/>
            <person name="Sakano H."/>
            <person name="Wu T."/>
            <person name="Yu G."/>
            <person name="Miranda M."/>
            <person name="Quach H.L."/>
            <person name="Tripp M."/>
            <person name="Chang C.H."/>
            <person name="Lee J.M."/>
            <person name="Toriumi M.J."/>
            <person name="Chan M.M."/>
            <person name="Tang C.C."/>
            <person name="Onodera C.S."/>
            <person name="Deng J.M."/>
            <person name="Akiyama K."/>
            <person name="Ansari Y."/>
            <person name="Arakawa T."/>
            <person name="Banh J."/>
            <person name="Banno F."/>
            <person name="Bowser L."/>
            <person name="Brooks S.Y."/>
            <person name="Carninci P."/>
            <person name="Chao Q."/>
            <person name="Choy N."/>
            <person name="Enju A."/>
            <person name="Goldsmith A.D."/>
            <person name="Gurjal M."/>
            <person name="Hansen N.F."/>
            <person name="Hayashizaki Y."/>
            <person name="Johnson-Hopson C."/>
            <person name="Hsuan V.W."/>
            <person name="Iida K."/>
            <person name="Karnes M."/>
            <person name="Khan S."/>
            <person name="Koesema E."/>
            <person name="Ishida J."/>
            <person name="Jiang P.X."/>
            <person name="Jones T."/>
            <person name="Kawai J."/>
            <person name="Kamiya A."/>
            <person name="Meyers C."/>
            <person name="Nakajima M."/>
            <person name="Narusaka M."/>
            <person name="Seki M."/>
            <person name="Sakurai T."/>
            <person name="Satou M."/>
            <person name="Tamse R."/>
            <person name="Vaysberg M."/>
            <person name="Wallender E.K."/>
            <person name="Wong C."/>
            <person name="Yamamura Y."/>
            <person name="Yuan S."/>
            <person name="Shinozaki K."/>
            <person name="Davis R.W."/>
            <person name="Theologis A."/>
            <person name="Ecker J.R."/>
        </authorList>
    </citation>
    <scope>NUCLEOTIDE SEQUENCE [LARGE SCALE MRNA]</scope>
    <source>
        <strain>cv. Columbia</strain>
    </source>
</reference>
<reference key="5">
    <citation type="submission" date="2002-03" db="EMBL/GenBank/DDBJ databases">
        <title>Full-length cDNA from Arabidopsis thaliana.</title>
        <authorList>
            <person name="Brover V.V."/>
            <person name="Troukhan M.E."/>
            <person name="Alexandrov N.A."/>
            <person name="Lu Y.-P."/>
            <person name="Flavell R.B."/>
            <person name="Feldmann K.A."/>
        </authorList>
    </citation>
    <scope>NUCLEOTIDE SEQUENCE [LARGE SCALE MRNA] OF 111-455</scope>
</reference>
<reference key="6">
    <citation type="journal article" date="2009" name="Plant Physiol.">
        <title>Large-scale Arabidopsis phosphoproteome profiling reveals novel chloroplast kinase substrates and phosphorylation networks.</title>
        <authorList>
            <person name="Reiland S."/>
            <person name="Messerli G."/>
            <person name="Baerenfaller K."/>
            <person name="Gerrits B."/>
            <person name="Endler A."/>
            <person name="Grossmann J."/>
            <person name="Gruissem W."/>
            <person name="Baginsky S."/>
        </authorList>
    </citation>
    <scope>IDENTIFICATION BY MASS SPECTROMETRY [LARGE SCALE ANALYSIS]</scope>
</reference>
<reference key="7">
    <citation type="journal article" date="2010" name="Plant J.">
        <title>Characterization of SUN-domain proteins at the higher plant nuclear envelope.</title>
        <authorList>
            <person name="Graumann K."/>
            <person name="Runions J."/>
            <person name="Evans D.E."/>
        </authorList>
    </citation>
    <scope>TISSUE SPECIFICITY</scope>
    <scope>INDUCTION BY CELL PROLIFERATION</scope>
    <scope>SUBCELLULAR LOCATION</scope>
    <scope>SUBUNIT</scope>
</reference>
<reference key="8">
    <citation type="journal article" date="2011" name="Plant J.">
        <title>Dynamics of Arabidopsis SUN proteins during mitosis and their involvement in nuclear shaping.</title>
        <authorList>
            <person name="Oda Y."/>
            <person name="Fukuda H."/>
        </authorList>
    </citation>
    <scope>FUNCTION</scope>
    <scope>DISRUPTION PHENOTYPE</scope>
    <scope>SUBCELLULAR LOCATION</scope>
    <scope>TISSUE SPECIFICITY</scope>
</reference>
<reference key="9">
    <citation type="journal article" date="2012" name="J. Cell Biol.">
        <title>Novel plant SUN-KASH bridges are involved in RanGAP anchoring and nuclear shape determination.</title>
        <authorList>
            <person name="Zhou X."/>
            <person name="Graumann K."/>
            <person name="Evans D.E."/>
            <person name="Meier I."/>
        </authorList>
    </citation>
    <scope>FUNCTION</scope>
    <scope>INTERACTION WITH WIP1; WIP2 AND WIP3</scope>
    <scope>SUN DOMAIN</scope>
    <scope>SUBCELLULAR LOCATION</scope>
    <source>
        <strain>cv. Columbia</strain>
    </source>
</reference>
<reference key="10">
    <citation type="journal article" date="2012" name="Mol. Cell. Proteomics">
        <title>Comparative large-scale characterisation of plant vs. mammal proteins reveals similar and idiosyncratic N-alpha acetylation features.</title>
        <authorList>
            <person name="Bienvenut W.V."/>
            <person name="Sumpton D."/>
            <person name="Martinez A."/>
            <person name="Lilla S."/>
            <person name="Espagne C."/>
            <person name="Meinnel T."/>
            <person name="Giglione C."/>
        </authorList>
    </citation>
    <scope>ACETYLATION [LARGE SCALE ANALYSIS] AT SER-2</scope>
    <scope>CLEAVAGE OF INITIATOR METHIONINE [LARGE SCALE ANALYSIS]</scope>
    <scope>IDENTIFICATION BY MASS SPECTROMETRY [LARGE SCALE ANALYSIS]</scope>
</reference>
<reference key="11">
    <citation type="journal article" date="2013" name="Curr. Biol.">
        <title>Myosin XI-i links the nuclear membrane to the cytoskeleton to control nuclear movement and shape in Arabidopsis.</title>
        <authorList>
            <person name="Tamura K."/>
            <person name="Iwabuchi K."/>
            <person name="Fukao Y."/>
            <person name="Kondo M."/>
            <person name="Okamoto K."/>
            <person name="Ueda H."/>
            <person name="Nishimura M."/>
            <person name="Hara-Nishimura I."/>
        </authorList>
    </citation>
    <scope>INTERACTION WITH WIP1</scope>
</reference>
<reference key="12">
    <citation type="journal article" date="2014" name="J. Cell Biol.">
        <title>Identification of unique SUN-interacting nuclear envelope proteins with diverse functions in plants.</title>
        <authorList>
            <person name="Zhou X."/>
            <person name="Graumann K."/>
            <person name="Wirthmueller L."/>
            <person name="Jones J.D."/>
            <person name="Meier I."/>
        </authorList>
    </citation>
    <scope>INTERACTION WITH SINE1; SINE2; SINE3 AND SINE4</scope>
    <scope>MUTAGENESIS OF HIS-434 AND TYR-438</scope>
</reference>
<reference key="13">
    <citation type="journal article" date="2014" name="J. Exp. Bot.">
        <title>Characterization of two distinct subfamilies of SUN-domain proteins in Arabidopsis and their interactions with the novel KASH-domain protein AtTIK.</title>
        <authorList>
            <person name="Graumann K."/>
            <person name="Vanrobays E."/>
            <person name="Tutois S."/>
            <person name="Probst A.V."/>
            <person name="Evans D.E."/>
            <person name="Tatout C."/>
        </authorList>
    </citation>
    <scope>SUBUNIT</scope>
    <scope>INTERACTION WITH SUN3; SUN4 AND TIK</scope>
</reference>
<reference key="14">
    <citation type="journal article" date="2014" name="PLoS ONE">
        <title>Evidence for LINC1-SUN associations at the plant nuclear periphery.</title>
        <authorList>
            <person name="Graumann K."/>
        </authorList>
    </citation>
    <scope>FUNCTION</scope>
    <scope>SUBCELLULAR LOCATION</scope>
    <scope>INTERACTION WITH LINC1</scope>
</reference>
<reference key="15">
    <citation type="journal article" date="2015" name="J. Exp. Bot.">
        <title>The plant nuclear envelope as a multifunctional platform LINCed by SUN and KASH.</title>
        <authorList>
            <person name="Zhou X."/>
            <person name="Graumann K."/>
            <person name="Meier I."/>
        </authorList>
    </citation>
    <scope>REVIEW</scope>
</reference>
<reference key="16">
    <citation type="journal article" date="2015" name="Nucleus">
        <title>Plant nuclear shape is independently determined by the SUN-WIP-WIT2-myosin XI-i complex and CRWN1.</title>
        <authorList>
            <person name="Zhou X."/>
            <person name="Groves N.R."/>
            <person name="Meier I."/>
        </authorList>
    </citation>
    <scope>FUNCTION</scope>
    <scope>SUBUNIT</scope>
</reference>
<reference key="17">
    <citation type="journal article" date="2015" name="Plant J.">
        <title>Absence of SUN1 and SUN2 proteins in Arabidopsis thaliana leads to a delay in meiotic progression and defects in synapsis and recombination.</title>
        <authorList>
            <person name="Varas J."/>
            <person name="Graumann K."/>
            <person name="Osman K."/>
            <person name="Pradillo M."/>
            <person name="Evans D.E."/>
            <person name="Santos J.L."/>
            <person name="Armstrong S.J."/>
        </authorList>
    </citation>
    <scope>DISRUPTION PHENOTYPE</scope>
    <scope>SUBCELLULAR LOCATION</scope>
    <scope>FUNCTION</scope>
</reference>
<reference key="18">
    <citation type="journal article" date="2016" name="J. Exp. Bot.">
        <title>A novel family of plant nuclear envelope-associated proteins.</title>
        <authorList>
            <person name="Pawar V."/>
            <person name="Poulet A."/>
            <person name="Detourne G."/>
            <person name="Tatout C."/>
            <person name="Vanrobays E."/>
            <person name="Evans D.E."/>
            <person name="Graumann K."/>
        </authorList>
    </citation>
    <scope>INTERACTION WITH NEAP1; NEAP2 AND NEAP3</scope>
</reference>
<gene>
    <name evidence="17" type="primary">SUN2</name>
    <name evidence="19" type="ordered locus">At3g10730</name>
    <name evidence="20" type="ORF">T7M13.19</name>
</gene>
<protein>
    <recommendedName>
        <fullName evidence="17">SUN domain-containing protein 2</fullName>
        <shortName evidence="17">AtSUN2</shortName>
    </recommendedName>
</protein>
<organism>
    <name type="scientific">Arabidopsis thaliana</name>
    <name type="common">Mouse-ear cress</name>
    <dbReference type="NCBI Taxonomy" id="3702"/>
    <lineage>
        <taxon>Eukaryota</taxon>
        <taxon>Viridiplantae</taxon>
        <taxon>Streptophyta</taxon>
        <taxon>Embryophyta</taxon>
        <taxon>Tracheophyta</taxon>
        <taxon>Spermatophyta</taxon>
        <taxon>Magnoliopsida</taxon>
        <taxon>eudicotyledons</taxon>
        <taxon>Gunneridae</taxon>
        <taxon>Pentapetalae</taxon>
        <taxon>rosids</taxon>
        <taxon>malvids</taxon>
        <taxon>Brassicales</taxon>
        <taxon>Brassicaceae</taxon>
        <taxon>Camelineae</taxon>
        <taxon>Arabidopsis</taxon>
    </lineage>
</organism>
<accession>Q9SG79</accession>
<accession>Q8L9I5</accession>
<feature type="initiator methionine" description="Removed" evidence="21">
    <location>
        <position position="1"/>
    </location>
</feature>
<feature type="chain" id="PRO_0000432817" description="SUN domain-containing protein 2">
    <location>
        <begin position="2"/>
        <end position="455"/>
    </location>
</feature>
<feature type="topological domain" description="Nuclear" evidence="18">
    <location>
        <begin position="2"/>
        <end position="105"/>
    </location>
</feature>
<feature type="transmembrane region" description="Helical" evidence="3">
    <location>
        <begin position="106"/>
        <end position="128"/>
    </location>
</feature>
<feature type="topological domain" description="Perinuclear space" evidence="18">
    <location>
        <begin position="129"/>
        <end position="455"/>
    </location>
</feature>
<feature type="domain" description="SUN" evidence="5">
    <location>
        <begin position="285"/>
        <end position="447"/>
    </location>
</feature>
<feature type="region of interest" description="Disordered" evidence="6">
    <location>
        <begin position="1"/>
        <end position="99"/>
    </location>
</feature>
<feature type="coiled-coil region" evidence="3">
    <location>
        <begin position="201"/>
        <end position="225"/>
    </location>
</feature>
<feature type="short sequence motif" description="Nuclear localization signal" evidence="4">
    <location>
        <begin position="88"/>
        <end position="95"/>
    </location>
</feature>
<feature type="compositionally biased region" description="Polar residues" evidence="6">
    <location>
        <begin position="1"/>
        <end position="12"/>
    </location>
</feature>
<feature type="compositionally biased region" description="Low complexity" evidence="6">
    <location>
        <begin position="74"/>
        <end position="88"/>
    </location>
</feature>
<feature type="modified residue" description="N-acetylserine" evidence="21">
    <location>
        <position position="2"/>
    </location>
</feature>
<feature type="modified residue" description="Phosphoserine" evidence="2">
    <location>
        <position position="63"/>
    </location>
</feature>
<feature type="mutagenesis site" description="Strongly affects binding to SINE1, SINE2, SINE3 and SINE4; when associated with F-438." evidence="12">
    <original>H</original>
    <variation>A</variation>
    <location>
        <position position="434"/>
    </location>
</feature>
<feature type="mutagenesis site" description="Strongly affects binding to SINE1, SINE2, SINE3 and SINE4; when associated with A-434." evidence="12">
    <original>Y</original>
    <variation>F</variation>
    <location>
        <position position="438"/>
    </location>
</feature>
<feature type="sequence conflict" description="In Ref. 5; AAM65947." evidence="18" ref="5">
    <original>R</original>
    <variation>G</variation>
    <location>
        <position position="302"/>
    </location>
</feature>
<feature type="sequence conflict" description="In Ref. 5; AAM65947." evidence="18" ref="5">
    <original>D</original>
    <variation>N</variation>
    <location>
        <position position="398"/>
    </location>
</feature>